<dbReference type="EMBL" id="AL591688">
    <property type="protein sequence ID" value="CAC47612.1"/>
    <property type="status" value="ALT_INIT"/>
    <property type="molecule type" value="Genomic_DNA"/>
</dbReference>
<dbReference type="RefSeq" id="NP_387139.1">
    <property type="nucleotide sequence ID" value="NC_003047.1"/>
</dbReference>
<dbReference type="RefSeq" id="WP_003530304.1">
    <property type="nucleotide sequence ID" value="NC_003047.1"/>
</dbReference>
<dbReference type="SMR" id="Q92LK9"/>
<dbReference type="EnsemblBacteria" id="CAC47612">
    <property type="protein sequence ID" value="CAC47612"/>
    <property type="gene ID" value="SMc02502"/>
</dbReference>
<dbReference type="KEGG" id="sme:SMc02502"/>
<dbReference type="PATRIC" id="fig|266834.11.peg.4566"/>
<dbReference type="eggNOG" id="COG0355">
    <property type="taxonomic scope" value="Bacteria"/>
</dbReference>
<dbReference type="HOGENOM" id="CLU_084338_2_1_5"/>
<dbReference type="OrthoDB" id="9799969at2"/>
<dbReference type="Proteomes" id="UP000001976">
    <property type="component" value="Chromosome"/>
</dbReference>
<dbReference type="GO" id="GO:0005886">
    <property type="term" value="C:plasma membrane"/>
    <property type="evidence" value="ECO:0007669"/>
    <property type="project" value="UniProtKB-SubCell"/>
</dbReference>
<dbReference type="GO" id="GO:0045259">
    <property type="term" value="C:proton-transporting ATP synthase complex"/>
    <property type="evidence" value="ECO:0007669"/>
    <property type="project" value="UniProtKB-KW"/>
</dbReference>
<dbReference type="GO" id="GO:0005524">
    <property type="term" value="F:ATP binding"/>
    <property type="evidence" value="ECO:0007669"/>
    <property type="project" value="UniProtKB-UniRule"/>
</dbReference>
<dbReference type="GO" id="GO:0046933">
    <property type="term" value="F:proton-transporting ATP synthase activity, rotational mechanism"/>
    <property type="evidence" value="ECO:0007669"/>
    <property type="project" value="UniProtKB-UniRule"/>
</dbReference>
<dbReference type="CDD" id="cd12152">
    <property type="entry name" value="F1-ATPase_delta"/>
    <property type="match status" value="1"/>
</dbReference>
<dbReference type="Gene3D" id="2.60.15.10">
    <property type="entry name" value="F0F1 ATP synthase delta/epsilon subunit, N-terminal"/>
    <property type="match status" value="1"/>
</dbReference>
<dbReference type="HAMAP" id="MF_00530">
    <property type="entry name" value="ATP_synth_epsil_bac"/>
    <property type="match status" value="1"/>
</dbReference>
<dbReference type="InterPro" id="IPR001469">
    <property type="entry name" value="ATP_synth_F1_dsu/esu"/>
</dbReference>
<dbReference type="InterPro" id="IPR020546">
    <property type="entry name" value="ATP_synth_F1_dsu/esu_N"/>
</dbReference>
<dbReference type="InterPro" id="IPR036771">
    <property type="entry name" value="ATPsynth_dsu/esu_N"/>
</dbReference>
<dbReference type="NCBIfam" id="TIGR01216">
    <property type="entry name" value="ATP_synt_epsi"/>
    <property type="match status" value="1"/>
</dbReference>
<dbReference type="NCBIfam" id="NF001851">
    <property type="entry name" value="PRK00571.2-4"/>
    <property type="match status" value="1"/>
</dbReference>
<dbReference type="PANTHER" id="PTHR13822">
    <property type="entry name" value="ATP SYNTHASE DELTA/EPSILON CHAIN"/>
    <property type="match status" value="1"/>
</dbReference>
<dbReference type="PANTHER" id="PTHR13822:SF10">
    <property type="entry name" value="ATP SYNTHASE EPSILON CHAIN, CHLOROPLASTIC"/>
    <property type="match status" value="1"/>
</dbReference>
<dbReference type="Pfam" id="PF02823">
    <property type="entry name" value="ATP-synt_DE_N"/>
    <property type="match status" value="1"/>
</dbReference>
<dbReference type="SUPFAM" id="SSF51344">
    <property type="entry name" value="Epsilon subunit of F1F0-ATP synthase N-terminal domain"/>
    <property type="match status" value="1"/>
</dbReference>
<protein>
    <recommendedName>
        <fullName evidence="1">ATP synthase epsilon chain</fullName>
    </recommendedName>
    <alternativeName>
        <fullName evidence="1">ATP synthase F1 sector epsilon subunit</fullName>
    </alternativeName>
    <alternativeName>
        <fullName evidence="1">F-ATPase epsilon subunit</fullName>
    </alternativeName>
</protein>
<accession>Q92LK9</accession>
<reference key="1">
    <citation type="journal article" date="2001" name="Proc. Natl. Acad. Sci. U.S.A.">
        <title>Analysis of the chromosome sequence of the legume symbiont Sinorhizobium meliloti strain 1021.</title>
        <authorList>
            <person name="Capela D."/>
            <person name="Barloy-Hubler F."/>
            <person name="Gouzy J."/>
            <person name="Bothe G."/>
            <person name="Ampe F."/>
            <person name="Batut J."/>
            <person name="Boistard P."/>
            <person name="Becker A."/>
            <person name="Boutry M."/>
            <person name="Cadieu E."/>
            <person name="Dreano S."/>
            <person name="Gloux S."/>
            <person name="Godrie T."/>
            <person name="Goffeau A."/>
            <person name="Kahn D."/>
            <person name="Kiss E."/>
            <person name="Lelaure V."/>
            <person name="Masuy D."/>
            <person name="Pohl T."/>
            <person name="Portetelle D."/>
            <person name="Puehler A."/>
            <person name="Purnelle B."/>
            <person name="Ramsperger U."/>
            <person name="Renard C."/>
            <person name="Thebault P."/>
            <person name="Vandenbol M."/>
            <person name="Weidner S."/>
            <person name="Galibert F."/>
        </authorList>
    </citation>
    <scope>NUCLEOTIDE SEQUENCE [LARGE SCALE GENOMIC DNA]</scope>
    <source>
        <strain>1021</strain>
    </source>
</reference>
<reference key="2">
    <citation type="journal article" date="2001" name="Science">
        <title>The composite genome of the legume symbiont Sinorhizobium meliloti.</title>
        <authorList>
            <person name="Galibert F."/>
            <person name="Finan T.M."/>
            <person name="Long S.R."/>
            <person name="Puehler A."/>
            <person name="Abola P."/>
            <person name="Ampe F."/>
            <person name="Barloy-Hubler F."/>
            <person name="Barnett M.J."/>
            <person name="Becker A."/>
            <person name="Boistard P."/>
            <person name="Bothe G."/>
            <person name="Boutry M."/>
            <person name="Bowser L."/>
            <person name="Buhrmester J."/>
            <person name="Cadieu E."/>
            <person name="Capela D."/>
            <person name="Chain P."/>
            <person name="Cowie A."/>
            <person name="Davis R.W."/>
            <person name="Dreano S."/>
            <person name="Federspiel N.A."/>
            <person name="Fisher R.F."/>
            <person name="Gloux S."/>
            <person name="Godrie T."/>
            <person name="Goffeau A."/>
            <person name="Golding B."/>
            <person name="Gouzy J."/>
            <person name="Gurjal M."/>
            <person name="Hernandez-Lucas I."/>
            <person name="Hong A."/>
            <person name="Huizar L."/>
            <person name="Hyman R.W."/>
            <person name="Jones T."/>
            <person name="Kahn D."/>
            <person name="Kahn M.L."/>
            <person name="Kalman S."/>
            <person name="Keating D.H."/>
            <person name="Kiss E."/>
            <person name="Komp C."/>
            <person name="Lelaure V."/>
            <person name="Masuy D."/>
            <person name="Palm C."/>
            <person name="Peck M.C."/>
            <person name="Pohl T.M."/>
            <person name="Portetelle D."/>
            <person name="Purnelle B."/>
            <person name="Ramsperger U."/>
            <person name="Surzycki R."/>
            <person name="Thebault P."/>
            <person name="Vandenbol M."/>
            <person name="Vorhoelter F.J."/>
            <person name="Weidner S."/>
            <person name="Wells D.H."/>
            <person name="Wong K."/>
            <person name="Yeh K.-C."/>
            <person name="Batut J."/>
        </authorList>
    </citation>
    <scope>NUCLEOTIDE SEQUENCE [LARGE SCALE GENOMIC DNA]</scope>
    <source>
        <strain>1021</strain>
    </source>
</reference>
<keyword id="KW-0066">ATP synthesis</keyword>
<keyword id="KW-0997">Cell inner membrane</keyword>
<keyword id="KW-1003">Cell membrane</keyword>
<keyword id="KW-0139">CF(1)</keyword>
<keyword id="KW-0375">Hydrogen ion transport</keyword>
<keyword id="KW-0406">Ion transport</keyword>
<keyword id="KW-0472">Membrane</keyword>
<keyword id="KW-1185">Reference proteome</keyword>
<keyword id="KW-0813">Transport</keyword>
<organism>
    <name type="scientific">Rhizobium meliloti (strain 1021)</name>
    <name type="common">Ensifer meliloti</name>
    <name type="synonym">Sinorhizobium meliloti</name>
    <dbReference type="NCBI Taxonomy" id="266834"/>
    <lineage>
        <taxon>Bacteria</taxon>
        <taxon>Pseudomonadati</taxon>
        <taxon>Pseudomonadota</taxon>
        <taxon>Alphaproteobacteria</taxon>
        <taxon>Hyphomicrobiales</taxon>
        <taxon>Rhizobiaceae</taxon>
        <taxon>Sinorhizobium/Ensifer group</taxon>
        <taxon>Sinorhizobium</taxon>
    </lineage>
</organism>
<comment type="function">
    <text evidence="1">Produces ATP from ADP in the presence of a proton gradient across the membrane.</text>
</comment>
<comment type="subunit">
    <text>F-type ATPases have 2 components, CF(1) - the catalytic core - and CF(0) - the membrane proton channel. CF(1) has five subunits: alpha(3), beta(3), gamma(1), delta(1), epsilon(1). CF(0) has three main subunits: a, b and c.</text>
</comment>
<comment type="subcellular location">
    <subcellularLocation>
        <location evidence="1">Cell inner membrane</location>
        <topology evidence="1">Peripheral membrane protein</topology>
    </subcellularLocation>
</comment>
<comment type="similarity">
    <text evidence="1">Belongs to the ATPase epsilon chain family.</text>
</comment>
<comment type="sequence caution" evidence="2">
    <conflict type="erroneous initiation">
        <sequence resource="EMBL-CDS" id="CAC47612"/>
    </conflict>
</comment>
<feature type="chain" id="PRO_0000188186" description="ATP synthase epsilon chain">
    <location>
        <begin position="1"/>
        <end position="134"/>
    </location>
</feature>
<gene>
    <name evidence="1" type="primary">atpC</name>
    <name type="ordered locus">R03033</name>
    <name type="ORF">SMc02502</name>
</gene>
<evidence type="ECO:0000255" key="1">
    <source>
        <dbReference type="HAMAP-Rule" id="MF_00530"/>
    </source>
</evidence>
<evidence type="ECO:0000305" key="2"/>
<name>ATPE_RHIME</name>
<sequence>MAESFNFELVSPERLLVSEKVTEVVIPATEGEMTVMANHAPTMTTIKPGVVAVKTAAGKTERYAVFGGFADILPSGCTLLAESAVHVDELDPTVLENRIEAARAELEGAGDEKKTRLEQFIAELTKLGEIVIPA</sequence>
<proteinExistence type="inferred from homology"/>